<dbReference type="EMBL" id="BC088277">
    <property type="protein sequence ID" value="AAH88277.1"/>
    <property type="molecule type" value="mRNA"/>
</dbReference>
<dbReference type="RefSeq" id="NP_001014178.2">
    <property type="nucleotide sequence ID" value="NM_001014156.1"/>
</dbReference>
<dbReference type="FunCoup" id="Q5M831">
    <property type="interactions" value="910"/>
</dbReference>
<dbReference type="STRING" id="10116.ENSRNOP00000014090"/>
<dbReference type="iPTMnet" id="Q5M831"/>
<dbReference type="PhosphoSitePlus" id="Q5M831"/>
<dbReference type="PaxDb" id="10116-ENSRNOP00000014090"/>
<dbReference type="GeneID" id="361437"/>
<dbReference type="KEGG" id="rno:361437"/>
<dbReference type="UCSC" id="RGD:1310008">
    <property type="organism name" value="rat"/>
</dbReference>
<dbReference type="AGR" id="RGD:1310008"/>
<dbReference type="CTD" id="79007"/>
<dbReference type="RGD" id="1310008">
    <property type="gene designation" value="Dbndd1"/>
</dbReference>
<dbReference type="eggNOG" id="ENOG502S0DA">
    <property type="taxonomic scope" value="Eukaryota"/>
</dbReference>
<dbReference type="InParanoid" id="Q5M831"/>
<dbReference type="OrthoDB" id="67849at9989"/>
<dbReference type="PhylomeDB" id="Q5M831"/>
<dbReference type="PRO" id="PR:Q5M831"/>
<dbReference type="Proteomes" id="UP000002494">
    <property type="component" value="Unplaced"/>
</dbReference>
<dbReference type="GO" id="GO:0005737">
    <property type="term" value="C:cytoplasm"/>
    <property type="evidence" value="ECO:0007669"/>
    <property type="project" value="InterPro"/>
</dbReference>
<dbReference type="GO" id="GO:0009966">
    <property type="term" value="P:regulation of signal transduction"/>
    <property type="evidence" value="ECO:0000318"/>
    <property type="project" value="GO_Central"/>
</dbReference>
<dbReference type="InterPro" id="IPR007531">
    <property type="entry name" value="Dysbindin"/>
</dbReference>
<dbReference type="PANTHER" id="PTHR16294:SF4">
    <property type="entry name" value="DYSBINDIN DOMAIN-CONTAINING PROTEIN 1"/>
    <property type="match status" value="1"/>
</dbReference>
<dbReference type="PANTHER" id="PTHR16294">
    <property type="entry name" value="DYSTROBREVIN BINDING PROTEIN 1 DYSBINDIN"/>
    <property type="match status" value="1"/>
</dbReference>
<dbReference type="Pfam" id="PF04440">
    <property type="entry name" value="Dysbindin"/>
    <property type="match status" value="1"/>
</dbReference>
<comment type="similarity">
    <text evidence="3">Belongs to the dysbindin family.</text>
</comment>
<reference key="1">
    <citation type="journal article" date="2004" name="Genome Res.">
        <title>The status, quality, and expansion of the NIH full-length cDNA project: the Mammalian Gene Collection (MGC).</title>
        <authorList>
            <consortium name="The MGC Project Team"/>
        </authorList>
    </citation>
    <scope>NUCLEOTIDE SEQUENCE [LARGE SCALE MRNA]</scope>
    <source>
        <tissue>Thymus</tissue>
    </source>
</reference>
<reference key="2">
    <citation type="journal article" date="2012" name="Nat. Commun.">
        <title>Quantitative maps of protein phosphorylation sites across 14 different rat organs and tissues.</title>
        <authorList>
            <person name="Lundby A."/>
            <person name="Secher A."/>
            <person name="Lage K."/>
            <person name="Nordsborg N.B."/>
            <person name="Dmytriyev A."/>
            <person name="Lundby C."/>
            <person name="Olsen J.V."/>
        </authorList>
    </citation>
    <scope>PHOSPHORYLATION [LARGE SCALE ANALYSIS] AT SER-3</scope>
    <scope>IDENTIFICATION BY MASS SPECTROMETRY [LARGE SCALE ANALYSIS]</scope>
</reference>
<proteinExistence type="evidence at protein level"/>
<protein>
    <recommendedName>
        <fullName>Dysbindin domain-containing protein 1</fullName>
    </recommendedName>
</protein>
<feature type="chain" id="PRO_0000291748" description="Dysbindin domain-containing protein 1">
    <location>
        <begin position="1"/>
        <end position="160"/>
    </location>
</feature>
<feature type="region of interest" description="Disordered" evidence="2">
    <location>
        <begin position="1"/>
        <end position="34"/>
    </location>
</feature>
<feature type="region of interest" description="Disordered" evidence="2">
    <location>
        <begin position="95"/>
        <end position="160"/>
    </location>
</feature>
<feature type="compositionally biased region" description="Basic and acidic residues" evidence="2">
    <location>
        <begin position="127"/>
        <end position="143"/>
    </location>
</feature>
<feature type="modified residue" description="Phosphoserine" evidence="4">
    <location>
        <position position="3"/>
    </location>
</feature>
<feature type="modified residue" description="Phosphoserine" evidence="1">
    <location>
        <position position="97"/>
    </location>
</feature>
<feature type="modified residue" description="Phosphoserine" evidence="1">
    <location>
        <position position="121"/>
    </location>
</feature>
<sequence length="160" mass="17329">MESPEGAGPGEITKEVKVPQAAPSVPAHETGDTCHTPVAAVEEEVGIPIPAPGFLQVTERRQPLSSVSSLEVHFDLLDLTELTDMSDQELAEVFADSDDENLATESPAGLHPLSRASCLRSPSWTKTRAEQNREKQTPSDPERQGTIVDTFLTVEEPKED</sequence>
<name>DBND1_RAT</name>
<gene>
    <name type="primary">Dbndd1</name>
</gene>
<keyword id="KW-0597">Phosphoprotein</keyword>
<keyword id="KW-1185">Reference proteome</keyword>
<accession>Q5M831</accession>
<evidence type="ECO:0000250" key="1">
    <source>
        <dbReference type="UniProtKB" id="Q9H9R9"/>
    </source>
</evidence>
<evidence type="ECO:0000256" key="2">
    <source>
        <dbReference type="SAM" id="MobiDB-lite"/>
    </source>
</evidence>
<evidence type="ECO:0000305" key="3"/>
<evidence type="ECO:0007744" key="4">
    <source>
    </source>
</evidence>
<organism>
    <name type="scientific">Rattus norvegicus</name>
    <name type="common">Rat</name>
    <dbReference type="NCBI Taxonomy" id="10116"/>
    <lineage>
        <taxon>Eukaryota</taxon>
        <taxon>Metazoa</taxon>
        <taxon>Chordata</taxon>
        <taxon>Craniata</taxon>
        <taxon>Vertebrata</taxon>
        <taxon>Euteleostomi</taxon>
        <taxon>Mammalia</taxon>
        <taxon>Eutheria</taxon>
        <taxon>Euarchontoglires</taxon>
        <taxon>Glires</taxon>
        <taxon>Rodentia</taxon>
        <taxon>Myomorpha</taxon>
        <taxon>Muroidea</taxon>
        <taxon>Muridae</taxon>
        <taxon>Murinae</taxon>
        <taxon>Rattus</taxon>
    </lineage>
</organism>